<protein>
    <recommendedName>
        <fullName>Cytochrome b</fullName>
    </recommendedName>
    <alternativeName>
        <fullName>Complex III subunit 3</fullName>
    </alternativeName>
    <alternativeName>
        <fullName>Complex III subunit III</fullName>
    </alternativeName>
    <alternativeName>
        <fullName>Cytochrome b-c1 complex subunit 3</fullName>
    </alternativeName>
    <alternativeName>
        <fullName>Ubiquinol-cytochrome-c reductase complex cytochrome b subunit</fullName>
    </alternativeName>
</protein>
<reference key="1">
    <citation type="thesis" date="1997" institute="Queen's University / Kingston" country="Canada">
        <title>Hic Sunt Serpentes -- molecular phylogenetics and the Boidae (Serpentes: Booidea).</title>
        <authorList>
            <person name="Campbell B.N."/>
        </authorList>
    </citation>
    <scope>NUCLEOTIDE SEQUENCE [GENOMIC DNA]</scope>
</reference>
<feature type="chain" id="PRO_0000061517" description="Cytochrome b">
    <location>
        <begin position="1"/>
        <end position="372"/>
    </location>
</feature>
<feature type="transmembrane region" description="Helical" evidence="2">
    <location>
        <begin position="25"/>
        <end position="45"/>
    </location>
</feature>
<feature type="transmembrane region" description="Helical" evidence="2">
    <location>
        <begin position="69"/>
        <end position="90"/>
    </location>
</feature>
<feature type="transmembrane region" description="Helical" evidence="2">
    <location>
        <begin position="105"/>
        <end position="125"/>
    </location>
</feature>
<feature type="transmembrane region" description="Helical" evidence="2">
    <location>
        <begin position="170"/>
        <end position="190"/>
    </location>
</feature>
<feature type="transmembrane region" description="Helical" evidence="2">
    <location>
        <begin position="218"/>
        <end position="238"/>
    </location>
</feature>
<feature type="transmembrane region" description="Helical" evidence="2">
    <location>
        <begin position="280"/>
        <end position="300"/>
    </location>
</feature>
<feature type="transmembrane region" description="Helical" evidence="2">
    <location>
        <begin position="312"/>
        <end position="332"/>
    </location>
</feature>
<feature type="transmembrane region" description="Helical" evidence="2">
    <location>
        <begin position="339"/>
        <end position="358"/>
    </location>
</feature>
<feature type="binding site" description="axial binding residue" evidence="2">
    <location>
        <position position="75"/>
    </location>
    <ligand>
        <name>heme b</name>
        <dbReference type="ChEBI" id="CHEBI:60344"/>
        <label>b562</label>
    </ligand>
    <ligandPart>
        <name>Fe</name>
        <dbReference type="ChEBI" id="CHEBI:18248"/>
    </ligandPart>
</feature>
<feature type="binding site" description="axial binding residue" evidence="2">
    <location>
        <position position="89"/>
    </location>
    <ligand>
        <name>heme b</name>
        <dbReference type="ChEBI" id="CHEBI:60344"/>
        <label>b566</label>
    </ligand>
    <ligandPart>
        <name>Fe</name>
        <dbReference type="ChEBI" id="CHEBI:18248"/>
    </ligandPart>
</feature>
<feature type="binding site" description="axial binding residue" evidence="2">
    <location>
        <position position="174"/>
    </location>
    <ligand>
        <name>heme b</name>
        <dbReference type="ChEBI" id="CHEBI:60344"/>
        <label>b562</label>
    </ligand>
    <ligandPart>
        <name>Fe</name>
        <dbReference type="ChEBI" id="CHEBI:18248"/>
    </ligandPart>
</feature>
<feature type="binding site" description="axial binding residue" evidence="2">
    <location>
        <position position="188"/>
    </location>
    <ligand>
        <name>heme b</name>
        <dbReference type="ChEBI" id="CHEBI:60344"/>
        <label>b566</label>
    </ligand>
    <ligandPart>
        <name>Fe</name>
        <dbReference type="ChEBI" id="CHEBI:18248"/>
    </ligandPart>
</feature>
<feature type="binding site" evidence="2">
    <location>
        <position position="193"/>
    </location>
    <ligand>
        <name>a ubiquinone</name>
        <dbReference type="ChEBI" id="CHEBI:16389"/>
    </ligand>
</feature>
<proteinExistence type="inferred from homology"/>
<sequence>MPHQHILMLFGLLPVATNISTWWNFGSMLLTCSALQIMTGFFLAVHYTANINLAFSSIIHNTRDVPHGWMMQNLHAIGASMFFICIYIHMARGLYYGSYLNKETWLSGTTLLIMLMATAFFGYVLPWGQMSFWAATVITNLLTAIPYLGTTMTTWLWGGFAINDPTLTRFFALHFILPFGIISLSSLHIMLLHEEGSSNPLGTNSDIDKIPFHPYHTYKDLFMISSMIMIMLLTISFLPDIFNDPENFFKANLLTTPQHIKPEWYFLFAYGILRSIPNKLGGALALAMSIMILLTVPFTHTANTRSMTFRPFMQLMFWTLMATFIIITWTATKPVEAPYTTISQVASTLYFMFFMSNLILGWLENKIMKTQL</sequence>
<organism>
    <name type="scientific">Sanzinia madagascariensis</name>
    <name type="common">Madagascar tree boa</name>
    <name type="synonym">Boa manditra</name>
    <dbReference type="NCBI Taxonomy" id="51881"/>
    <lineage>
        <taxon>Eukaryota</taxon>
        <taxon>Metazoa</taxon>
        <taxon>Chordata</taxon>
        <taxon>Craniata</taxon>
        <taxon>Vertebrata</taxon>
        <taxon>Euteleostomi</taxon>
        <taxon>Lepidosauria</taxon>
        <taxon>Squamata</taxon>
        <taxon>Bifurcata</taxon>
        <taxon>Unidentata</taxon>
        <taxon>Episquamata</taxon>
        <taxon>Toxicofera</taxon>
        <taxon>Serpentes</taxon>
        <taxon>Henophidia</taxon>
        <taxon>Boidae</taxon>
        <taxon>Boinae</taxon>
        <taxon>Sanzinia</taxon>
    </lineage>
</organism>
<gene>
    <name type="primary">MT-CYB</name>
    <name type="synonym">COB</name>
    <name type="synonym">CYTB</name>
    <name type="synonym">MTCYB</name>
</gene>
<keyword id="KW-0249">Electron transport</keyword>
<keyword id="KW-0349">Heme</keyword>
<keyword id="KW-0408">Iron</keyword>
<keyword id="KW-0472">Membrane</keyword>
<keyword id="KW-0479">Metal-binding</keyword>
<keyword id="KW-0496">Mitochondrion</keyword>
<keyword id="KW-0999">Mitochondrion inner membrane</keyword>
<keyword id="KW-0679">Respiratory chain</keyword>
<keyword id="KW-0812">Transmembrane</keyword>
<keyword id="KW-1133">Transmembrane helix</keyword>
<keyword id="KW-0813">Transport</keyword>
<keyword id="KW-0830">Ubiquinone</keyword>
<evidence type="ECO:0000250" key="1"/>
<evidence type="ECO:0000250" key="2">
    <source>
        <dbReference type="UniProtKB" id="P00157"/>
    </source>
</evidence>
<evidence type="ECO:0000255" key="3">
    <source>
        <dbReference type="PROSITE-ProRule" id="PRU00967"/>
    </source>
</evidence>
<evidence type="ECO:0000255" key="4">
    <source>
        <dbReference type="PROSITE-ProRule" id="PRU00968"/>
    </source>
</evidence>
<dbReference type="EMBL" id="U69866">
    <property type="protein sequence ID" value="AAC01900.1"/>
    <property type="molecule type" value="Genomic_DNA"/>
</dbReference>
<dbReference type="SMR" id="O48114"/>
<dbReference type="GO" id="GO:0005743">
    <property type="term" value="C:mitochondrial inner membrane"/>
    <property type="evidence" value="ECO:0007669"/>
    <property type="project" value="UniProtKB-SubCell"/>
</dbReference>
<dbReference type="GO" id="GO:0045275">
    <property type="term" value="C:respiratory chain complex III"/>
    <property type="evidence" value="ECO:0007669"/>
    <property type="project" value="InterPro"/>
</dbReference>
<dbReference type="GO" id="GO:0046872">
    <property type="term" value="F:metal ion binding"/>
    <property type="evidence" value="ECO:0007669"/>
    <property type="project" value="UniProtKB-KW"/>
</dbReference>
<dbReference type="GO" id="GO:0008121">
    <property type="term" value="F:ubiquinol-cytochrome-c reductase activity"/>
    <property type="evidence" value="ECO:0007669"/>
    <property type="project" value="InterPro"/>
</dbReference>
<dbReference type="GO" id="GO:0006122">
    <property type="term" value="P:mitochondrial electron transport, ubiquinol to cytochrome c"/>
    <property type="evidence" value="ECO:0007669"/>
    <property type="project" value="TreeGrafter"/>
</dbReference>
<dbReference type="CDD" id="cd00290">
    <property type="entry name" value="cytochrome_b_C"/>
    <property type="match status" value="1"/>
</dbReference>
<dbReference type="CDD" id="cd00284">
    <property type="entry name" value="Cytochrome_b_N"/>
    <property type="match status" value="1"/>
</dbReference>
<dbReference type="Gene3D" id="1.20.810.10">
    <property type="entry name" value="Cytochrome Bc1 Complex, Chain C"/>
    <property type="match status" value="1"/>
</dbReference>
<dbReference type="InterPro" id="IPR005798">
    <property type="entry name" value="Cyt_b/b6_C"/>
</dbReference>
<dbReference type="InterPro" id="IPR036150">
    <property type="entry name" value="Cyt_b/b6_C_sf"/>
</dbReference>
<dbReference type="InterPro" id="IPR005797">
    <property type="entry name" value="Cyt_b/b6_N"/>
</dbReference>
<dbReference type="InterPro" id="IPR027387">
    <property type="entry name" value="Cytb/b6-like_sf"/>
</dbReference>
<dbReference type="InterPro" id="IPR030689">
    <property type="entry name" value="Cytochrome_b"/>
</dbReference>
<dbReference type="InterPro" id="IPR048260">
    <property type="entry name" value="Cytochrome_b_C_euk/bac"/>
</dbReference>
<dbReference type="InterPro" id="IPR048259">
    <property type="entry name" value="Cytochrome_b_N_euk/bac"/>
</dbReference>
<dbReference type="InterPro" id="IPR016174">
    <property type="entry name" value="Di-haem_cyt_TM"/>
</dbReference>
<dbReference type="PANTHER" id="PTHR19271">
    <property type="entry name" value="CYTOCHROME B"/>
    <property type="match status" value="1"/>
</dbReference>
<dbReference type="PANTHER" id="PTHR19271:SF16">
    <property type="entry name" value="CYTOCHROME B"/>
    <property type="match status" value="1"/>
</dbReference>
<dbReference type="Pfam" id="PF00032">
    <property type="entry name" value="Cytochrom_B_C"/>
    <property type="match status" value="1"/>
</dbReference>
<dbReference type="Pfam" id="PF00033">
    <property type="entry name" value="Cytochrome_B"/>
    <property type="match status" value="1"/>
</dbReference>
<dbReference type="PIRSF" id="PIRSF038885">
    <property type="entry name" value="COB"/>
    <property type="match status" value="1"/>
</dbReference>
<dbReference type="SUPFAM" id="SSF81648">
    <property type="entry name" value="a domain/subunit of cytochrome bc1 complex (Ubiquinol-cytochrome c reductase)"/>
    <property type="match status" value="1"/>
</dbReference>
<dbReference type="SUPFAM" id="SSF81342">
    <property type="entry name" value="Transmembrane di-heme cytochromes"/>
    <property type="match status" value="1"/>
</dbReference>
<dbReference type="PROSITE" id="PS51003">
    <property type="entry name" value="CYTB_CTER"/>
    <property type="match status" value="1"/>
</dbReference>
<dbReference type="PROSITE" id="PS51002">
    <property type="entry name" value="CYTB_NTER"/>
    <property type="match status" value="1"/>
</dbReference>
<geneLocation type="mitochondrion"/>
<name>CYB_SANME</name>
<comment type="function">
    <text evidence="2">Component of the ubiquinol-cytochrome c reductase complex (complex III or cytochrome b-c1 complex) that is part of the mitochondrial respiratory chain. The b-c1 complex mediates electron transfer from ubiquinol to cytochrome c. Contributes to the generation of a proton gradient across the mitochondrial membrane that is then used for ATP synthesis.</text>
</comment>
<comment type="cofactor">
    <cofactor evidence="2">
        <name>heme b</name>
        <dbReference type="ChEBI" id="CHEBI:60344"/>
    </cofactor>
    <text evidence="2">Binds 2 heme b groups non-covalently.</text>
</comment>
<comment type="subunit">
    <text evidence="2">The cytochrome bc1 complex contains 3 respiratory subunits (MT-CYB, CYC1 and UQCRFS1), 2 core proteins (UQCRC1 and UQCRC2) and probably 6 low-molecular weight proteins.</text>
</comment>
<comment type="subcellular location">
    <subcellularLocation>
        <location evidence="2">Mitochondrion inner membrane</location>
        <topology evidence="2">Multi-pass membrane protein</topology>
    </subcellularLocation>
</comment>
<comment type="miscellaneous">
    <text evidence="1">Heme 1 (or BL or b562) is low-potential and absorbs at about 562 nm, and heme 2 (or BH or b566) is high-potential and absorbs at about 566 nm.</text>
</comment>
<comment type="similarity">
    <text evidence="3 4">Belongs to the cytochrome b family.</text>
</comment>
<comment type="caution">
    <text evidence="2">The full-length protein contains only eight transmembrane helices, not nine as predicted by bioinformatics tools.</text>
</comment>
<accession>O48114</accession>